<protein>
    <recommendedName>
        <fullName evidence="5">Magnetosome protein MamR</fullName>
    </recommendedName>
</protein>
<accession>Q2W8L5</accession>
<keyword id="KW-0091">Biomineralization</keyword>
<keyword id="KW-1281">Magnetosome</keyword>
<comment type="function">
    <text evidence="6">May play a role in controlling magnetite number and size but not in control of magnetite morphology.</text>
</comment>
<comment type="subcellular location">
    <subcellularLocation>
        <location evidence="1">Magnetosome</location>
    </subcellularLocation>
</comment>
<comment type="induction">
    <text evidence="6">Locus amb0973 is part of the probable 18 gene mamAB operon.</text>
</comment>
<comment type="disruption phenotype">
    <text evidence="2">When both copies of this protein are deleted cells have a weak magnetic response and make magnetosome membranes; the magnetosomes are less numerous and smaller. Deletion of just amb0973 leads to an intermediate magnetic response and still makes magnetosome membranes (PubMed:20212111). Deletion of genes mamH to mamV (amb0961 to amb0978) gives cells with no magnetosomes and no magnetic response (PubMed:20212111).</text>
</comment>
<comment type="miscellaneous">
    <text evidence="5">This bacteria makes up to 20 cubo-octahedral magnetosomes of about 45 nm in diameter which contain membrane-bound crystals of magnetite (Fe(3)O(4)).</text>
</comment>
<comment type="miscellaneous">
    <text evidence="3">Expression of just the minimal mamAB gene cluster (amb0961 to amb0978), including this gene, is sufficient to form a minimal magnetosome chain with small magnetite particles.</text>
</comment>
<comment type="similarity">
    <text evidence="5">Belongs to the magnetosome MamR family.</text>
</comment>
<feature type="chain" id="PRO_0000447809" description="Magnetosome protein MamR">
    <location>
        <begin position="1"/>
        <end position="84"/>
    </location>
</feature>
<gene>
    <name evidence="4" type="primary">mamR</name>
    <name type="ordered locus">amb0973</name>
    <name type="ordered locus">amb1006</name>
</gene>
<sequence length="84" mass="9283">MIWTAVIKGSALVTFVQGAMVLVDKIFGEEILPHRIYSSAEASQLLGMDRLEVLGLIRSGTIKAKKVGDNYRILGSNLVDYMNR</sequence>
<proteinExistence type="inferred from homology"/>
<organism>
    <name type="scientific">Paramagnetospirillum magneticum (strain ATCC 700264 / AMB-1)</name>
    <name type="common">Magnetospirillum magneticum</name>
    <dbReference type="NCBI Taxonomy" id="342108"/>
    <lineage>
        <taxon>Bacteria</taxon>
        <taxon>Pseudomonadati</taxon>
        <taxon>Pseudomonadota</taxon>
        <taxon>Alphaproteobacteria</taxon>
        <taxon>Rhodospirillales</taxon>
        <taxon>Magnetospirillaceae</taxon>
        <taxon>Paramagnetospirillum</taxon>
    </lineage>
</organism>
<dbReference type="EMBL" id="AP007255">
    <property type="protein sequence ID" value="BAE49777.1"/>
    <property type="molecule type" value="Genomic_DNA"/>
</dbReference>
<dbReference type="EMBL" id="AP007255">
    <property type="protein sequence ID" value="BAE49810.1"/>
    <property type="molecule type" value="Genomic_DNA"/>
</dbReference>
<dbReference type="RefSeq" id="WP_008622632.1">
    <property type="nucleotide sequence ID" value="NC_007626.1"/>
</dbReference>
<dbReference type="STRING" id="342108.amb0973"/>
<dbReference type="KEGG" id="mag:amb0973"/>
<dbReference type="KEGG" id="mag:amb1006"/>
<dbReference type="HOGENOM" id="CLU_2523586_0_0_5"/>
<dbReference type="OrthoDB" id="3234977at2"/>
<dbReference type="Proteomes" id="UP000007058">
    <property type="component" value="Chromosome"/>
</dbReference>
<dbReference type="GO" id="GO:0110143">
    <property type="term" value="C:magnetosome"/>
    <property type="evidence" value="ECO:0000250"/>
    <property type="project" value="UniProtKB"/>
</dbReference>
<dbReference type="InterPro" id="IPR041657">
    <property type="entry name" value="HTH_17"/>
</dbReference>
<dbReference type="NCBIfam" id="NF040990">
    <property type="entry name" value="MamR"/>
    <property type="match status" value="1"/>
</dbReference>
<dbReference type="Pfam" id="PF12728">
    <property type="entry name" value="HTH_17"/>
    <property type="match status" value="1"/>
</dbReference>
<evidence type="ECO:0000250" key="1">
    <source>
        <dbReference type="UniProtKB" id="Q6NE51"/>
    </source>
</evidence>
<evidence type="ECO:0000269" key="2">
    <source>
    </source>
</evidence>
<evidence type="ECO:0000269" key="3">
    <source>
    </source>
</evidence>
<evidence type="ECO:0000303" key="4">
    <source>
    </source>
</evidence>
<evidence type="ECO:0000305" key="5"/>
<evidence type="ECO:0000305" key="6">
    <source>
    </source>
</evidence>
<reference key="1">
    <citation type="journal article" date="2005" name="DNA Res.">
        <title>Complete genome sequence of the facultative anaerobic magnetotactic bacterium Magnetospirillum sp. strain AMB-1.</title>
        <authorList>
            <person name="Matsunaga T."/>
            <person name="Okamura Y."/>
            <person name="Fukuda Y."/>
            <person name="Wahyudi A.T."/>
            <person name="Murase Y."/>
            <person name="Takeyama H."/>
        </authorList>
    </citation>
    <scope>NUCLEOTIDE SEQUENCE [LARGE SCALE GENOMIC DNA]</scope>
    <source>
        <strain>ATCC 700264 / AMB-1</strain>
    </source>
</reference>
<reference key="2">
    <citation type="journal article" date="2010" name="Proc. Natl. Acad. Sci. U.S.A.">
        <title>Comprehensive genetic dissection of the magnetosome gene island reveals the step-wise assembly of a prokaryotic organelle.</title>
        <authorList>
            <person name="Murat D."/>
            <person name="Quinlan A."/>
            <person name="Vali H."/>
            <person name="Komeili A."/>
        </authorList>
    </citation>
    <scope>FUNCTION</scope>
    <scope>PROBABLE OPERON</scope>
    <scope>DISRUPTION PHENOTYPE</scope>
    <source>
        <strain>ATCC 700264 / AMB-1</strain>
    </source>
</reference>
<reference key="3">
    <citation type="journal article" date="2012" name="Mol. Microbiol.">
        <title>The magnetosome membrane protein, MmsF, is a major regulator of magnetite biomineralization in Magnetospirillum magneticum AMB-1.</title>
        <authorList>
            <person name="Murat D."/>
            <person name="Falahati V."/>
            <person name="Bertinetti L."/>
            <person name="Csencsits R."/>
            <person name="Koernig A."/>
            <person name="Downing K."/>
            <person name="Faivre D."/>
            <person name="Komeili A."/>
        </authorList>
    </citation>
    <scope>MINIMAL MAGNETOSOME ISLAND</scope>
    <source>
        <strain>ATCC 700264 / AMB-1</strain>
    </source>
</reference>
<name>MAMR_PARM1</name>